<organism>
    <name type="scientific">Rhizobium etli (strain CIAT 652)</name>
    <dbReference type="NCBI Taxonomy" id="491916"/>
    <lineage>
        <taxon>Bacteria</taxon>
        <taxon>Pseudomonadati</taxon>
        <taxon>Pseudomonadota</taxon>
        <taxon>Alphaproteobacteria</taxon>
        <taxon>Hyphomicrobiales</taxon>
        <taxon>Rhizobiaceae</taxon>
        <taxon>Rhizobium/Agrobacterium group</taxon>
        <taxon>Rhizobium</taxon>
    </lineage>
</organism>
<comment type="function">
    <text evidence="1">Catalyzes the NAD(+)-dependent oxidation of L-threonine to 2-amino-3-ketobutyrate.</text>
</comment>
<comment type="catalytic activity">
    <reaction evidence="1">
        <text>L-threonine + NAD(+) = (2S)-2-amino-3-oxobutanoate + NADH + H(+)</text>
        <dbReference type="Rhea" id="RHEA:13161"/>
        <dbReference type="ChEBI" id="CHEBI:15378"/>
        <dbReference type="ChEBI" id="CHEBI:57540"/>
        <dbReference type="ChEBI" id="CHEBI:57926"/>
        <dbReference type="ChEBI" id="CHEBI:57945"/>
        <dbReference type="ChEBI" id="CHEBI:78948"/>
        <dbReference type="EC" id="1.1.1.103"/>
    </reaction>
</comment>
<comment type="cofactor">
    <cofactor evidence="1">
        <name>Zn(2+)</name>
        <dbReference type="ChEBI" id="CHEBI:29105"/>
    </cofactor>
    <text evidence="1">Binds 2 Zn(2+) ions per subunit.</text>
</comment>
<comment type="pathway">
    <text evidence="1">Amino-acid degradation; L-threonine degradation via oxydo-reductase pathway; glycine from L-threonine: step 1/2.</text>
</comment>
<comment type="subunit">
    <text evidence="1">Homotetramer.</text>
</comment>
<comment type="subcellular location">
    <subcellularLocation>
        <location evidence="1">Cytoplasm</location>
    </subcellularLocation>
</comment>
<comment type="similarity">
    <text evidence="1">Belongs to the zinc-containing alcohol dehydrogenase family.</text>
</comment>
<dbReference type="EC" id="1.1.1.103" evidence="1"/>
<dbReference type="EMBL" id="CP001074">
    <property type="protein sequence ID" value="ACE92065.1"/>
    <property type="molecule type" value="Genomic_DNA"/>
</dbReference>
<dbReference type="SMR" id="B3PUI4"/>
<dbReference type="KEGG" id="rec:RHECIAT_CH0003117"/>
<dbReference type="eggNOG" id="COG1063">
    <property type="taxonomic scope" value="Bacteria"/>
</dbReference>
<dbReference type="HOGENOM" id="CLU_026673_11_0_5"/>
<dbReference type="UniPathway" id="UPA00046">
    <property type="reaction ID" value="UER00505"/>
</dbReference>
<dbReference type="Proteomes" id="UP000008817">
    <property type="component" value="Chromosome"/>
</dbReference>
<dbReference type="GO" id="GO:0005737">
    <property type="term" value="C:cytoplasm"/>
    <property type="evidence" value="ECO:0007669"/>
    <property type="project" value="UniProtKB-SubCell"/>
</dbReference>
<dbReference type="GO" id="GO:0008743">
    <property type="term" value="F:L-threonine 3-dehydrogenase activity"/>
    <property type="evidence" value="ECO:0007669"/>
    <property type="project" value="UniProtKB-UniRule"/>
</dbReference>
<dbReference type="GO" id="GO:0008270">
    <property type="term" value="F:zinc ion binding"/>
    <property type="evidence" value="ECO:0007669"/>
    <property type="project" value="UniProtKB-UniRule"/>
</dbReference>
<dbReference type="GO" id="GO:0019518">
    <property type="term" value="P:L-threonine catabolic process to glycine"/>
    <property type="evidence" value="ECO:0007669"/>
    <property type="project" value="UniProtKB-UniPathway"/>
</dbReference>
<dbReference type="Gene3D" id="3.90.180.10">
    <property type="entry name" value="Medium-chain alcohol dehydrogenases, catalytic domain"/>
    <property type="match status" value="1"/>
</dbReference>
<dbReference type="Gene3D" id="3.40.50.720">
    <property type="entry name" value="NAD(P)-binding Rossmann-like Domain"/>
    <property type="match status" value="1"/>
</dbReference>
<dbReference type="HAMAP" id="MF_00627">
    <property type="entry name" value="Thr_dehydrog"/>
    <property type="match status" value="1"/>
</dbReference>
<dbReference type="InterPro" id="IPR013149">
    <property type="entry name" value="ADH-like_C"/>
</dbReference>
<dbReference type="InterPro" id="IPR013154">
    <property type="entry name" value="ADH-like_N"/>
</dbReference>
<dbReference type="InterPro" id="IPR002328">
    <property type="entry name" value="ADH_Zn_CS"/>
</dbReference>
<dbReference type="InterPro" id="IPR011032">
    <property type="entry name" value="GroES-like_sf"/>
</dbReference>
<dbReference type="InterPro" id="IPR004627">
    <property type="entry name" value="L-Threonine_3-DHase"/>
</dbReference>
<dbReference type="InterPro" id="IPR036291">
    <property type="entry name" value="NAD(P)-bd_dom_sf"/>
</dbReference>
<dbReference type="InterPro" id="IPR020843">
    <property type="entry name" value="PKS_ER"/>
</dbReference>
<dbReference type="InterPro" id="IPR050129">
    <property type="entry name" value="Zn_alcohol_dh"/>
</dbReference>
<dbReference type="NCBIfam" id="NF003808">
    <property type="entry name" value="PRK05396.1"/>
    <property type="match status" value="1"/>
</dbReference>
<dbReference type="NCBIfam" id="TIGR00692">
    <property type="entry name" value="tdh"/>
    <property type="match status" value="1"/>
</dbReference>
<dbReference type="PANTHER" id="PTHR43401">
    <property type="entry name" value="L-THREONINE 3-DEHYDROGENASE"/>
    <property type="match status" value="1"/>
</dbReference>
<dbReference type="PANTHER" id="PTHR43401:SF2">
    <property type="entry name" value="L-THREONINE 3-DEHYDROGENASE"/>
    <property type="match status" value="1"/>
</dbReference>
<dbReference type="Pfam" id="PF08240">
    <property type="entry name" value="ADH_N"/>
    <property type="match status" value="1"/>
</dbReference>
<dbReference type="Pfam" id="PF00107">
    <property type="entry name" value="ADH_zinc_N"/>
    <property type="match status" value="1"/>
</dbReference>
<dbReference type="SMART" id="SM00829">
    <property type="entry name" value="PKS_ER"/>
    <property type="match status" value="1"/>
</dbReference>
<dbReference type="SUPFAM" id="SSF50129">
    <property type="entry name" value="GroES-like"/>
    <property type="match status" value="1"/>
</dbReference>
<dbReference type="SUPFAM" id="SSF51735">
    <property type="entry name" value="NAD(P)-binding Rossmann-fold domains"/>
    <property type="match status" value="1"/>
</dbReference>
<dbReference type="PROSITE" id="PS00059">
    <property type="entry name" value="ADH_ZINC"/>
    <property type="match status" value="1"/>
</dbReference>
<reference key="1">
    <citation type="journal article" date="2010" name="Appl. Environ. Microbiol.">
        <title>Conserved symbiotic plasmid DNA sequences in the multireplicon pangenomic structure of Rhizobium etli.</title>
        <authorList>
            <person name="Gonzalez V."/>
            <person name="Acosta J.L."/>
            <person name="Santamaria R.I."/>
            <person name="Bustos P."/>
            <person name="Fernandez J.L."/>
            <person name="Hernandez Gonzalez I.L."/>
            <person name="Diaz R."/>
            <person name="Flores M."/>
            <person name="Palacios R."/>
            <person name="Mora J."/>
            <person name="Davila G."/>
        </authorList>
    </citation>
    <scope>NUCLEOTIDE SEQUENCE [LARGE SCALE GENOMIC DNA]</scope>
    <source>
        <strain>CIAT 652</strain>
    </source>
</reference>
<name>TDH_RHIE6</name>
<protein>
    <recommendedName>
        <fullName evidence="1">L-threonine 3-dehydrogenase</fullName>
        <shortName evidence="1">TDH</shortName>
        <ecNumber evidence="1">1.1.1.103</ecNumber>
    </recommendedName>
</protein>
<sequence length="345" mass="37504">MSNMMKALVKSKAEVGLWMEDVPVPEVGPNDVLIRVKKSAICGTDVHIWNWDQWAQKTIPVPMVVGHEFSGEIAEIGSAVTRYHVGERVSGEGHIVCGKCRNCRAGRGHLCRNTLGVGVNRPGSFGEFVCIPESNVVPIPDDISDEIAAIFDPFGNAVHTALSFDLVGEDVLVTGAGPIGIMGALVAKRSGARKVVITDINPHRLDLARKLGIDHVVDASKENLADVMKAIGMTEGFDVGLEMSGAAPAFRDMIDKMNNGGKIAILGIAPAGFEIDWNKVIFKMLNLKGIYGREMFETWYKMIAFVQGGLDLSPIITHRIKIDDFRDGFEAMRSGNSGKVVMDWM</sequence>
<gene>
    <name evidence="1" type="primary">tdh</name>
    <name type="ordered locus">RHECIAT_CH0003117</name>
</gene>
<feature type="chain" id="PRO_1000130556" description="L-threonine 3-dehydrogenase">
    <location>
        <begin position="1"/>
        <end position="345"/>
    </location>
</feature>
<feature type="active site" description="Charge relay system" evidence="1">
    <location>
        <position position="44"/>
    </location>
</feature>
<feature type="active site" description="Charge relay system" evidence="1">
    <location>
        <position position="47"/>
    </location>
</feature>
<feature type="binding site" evidence="1">
    <location>
        <position position="42"/>
    </location>
    <ligand>
        <name>Zn(2+)</name>
        <dbReference type="ChEBI" id="CHEBI:29105"/>
        <label>1</label>
        <note>catalytic</note>
    </ligand>
</feature>
<feature type="binding site" evidence="1">
    <location>
        <position position="67"/>
    </location>
    <ligand>
        <name>Zn(2+)</name>
        <dbReference type="ChEBI" id="CHEBI:29105"/>
        <label>1</label>
        <note>catalytic</note>
    </ligand>
</feature>
<feature type="binding site" evidence="1">
    <location>
        <position position="68"/>
    </location>
    <ligand>
        <name>Zn(2+)</name>
        <dbReference type="ChEBI" id="CHEBI:29105"/>
        <label>1</label>
        <note>catalytic</note>
    </ligand>
</feature>
<feature type="binding site" evidence="1">
    <location>
        <position position="97"/>
    </location>
    <ligand>
        <name>Zn(2+)</name>
        <dbReference type="ChEBI" id="CHEBI:29105"/>
        <label>2</label>
    </ligand>
</feature>
<feature type="binding site" evidence="1">
    <location>
        <position position="100"/>
    </location>
    <ligand>
        <name>Zn(2+)</name>
        <dbReference type="ChEBI" id="CHEBI:29105"/>
        <label>2</label>
    </ligand>
</feature>
<feature type="binding site" evidence="1">
    <location>
        <position position="103"/>
    </location>
    <ligand>
        <name>Zn(2+)</name>
        <dbReference type="ChEBI" id="CHEBI:29105"/>
        <label>2</label>
    </ligand>
</feature>
<feature type="binding site" evidence="1">
    <location>
        <position position="111"/>
    </location>
    <ligand>
        <name>Zn(2+)</name>
        <dbReference type="ChEBI" id="CHEBI:29105"/>
        <label>2</label>
    </ligand>
</feature>
<feature type="binding site" evidence="1">
    <location>
        <position position="179"/>
    </location>
    <ligand>
        <name>NAD(+)</name>
        <dbReference type="ChEBI" id="CHEBI:57540"/>
    </ligand>
</feature>
<feature type="binding site" evidence="1">
    <location>
        <position position="199"/>
    </location>
    <ligand>
        <name>NAD(+)</name>
        <dbReference type="ChEBI" id="CHEBI:57540"/>
    </ligand>
</feature>
<feature type="binding site" evidence="1">
    <location>
        <position position="204"/>
    </location>
    <ligand>
        <name>NAD(+)</name>
        <dbReference type="ChEBI" id="CHEBI:57540"/>
    </ligand>
</feature>
<feature type="binding site" evidence="1">
    <location>
        <begin position="266"/>
        <end position="268"/>
    </location>
    <ligand>
        <name>NAD(+)</name>
        <dbReference type="ChEBI" id="CHEBI:57540"/>
    </ligand>
</feature>
<feature type="binding site" evidence="1">
    <location>
        <begin position="290"/>
        <end position="291"/>
    </location>
    <ligand>
        <name>NAD(+)</name>
        <dbReference type="ChEBI" id="CHEBI:57540"/>
    </ligand>
</feature>
<feature type="site" description="Important for catalytic activity for the proton relay mechanism but does not participate directly in the coordination of zinc atom" evidence="1">
    <location>
        <position position="152"/>
    </location>
</feature>
<evidence type="ECO:0000255" key="1">
    <source>
        <dbReference type="HAMAP-Rule" id="MF_00627"/>
    </source>
</evidence>
<accession>B3PUI4</accession>
<keyword id="KW-0963">Cytoplasm</keyword>
<keyword id="KW-0479">Metal-binding</keyword>
<keyword id="KW-0520">NAD</keyword>
<keyword id="KW-0560">Oxidoreductase</keyword>
<keyword id="KW-0862">Zinc</keyword>
<proteinExistence type="inferred from homology"/>